<name>ASHH2_ARATH</name>
<dbReference type="EC" id="2.1.1.-"/>
<dbReference type="EMBL" id="DQ340869">
    <property type="protein sequence ID" value="ABC69038.1"/>
    <property type="molecule type" value="mRNA"/>
</dbReference>
<dbReference type="EMBL" id="EU014690">
    <property type="protein sequence ID" value="ABV68921.1"/>
    <property type="molecule type" value="mRNA"/>
</dbReference>
<dbReference type="EMBL" id="AC004260">
    <property type="protein sequence ID" value="AAC34358.1"/>
    <property type="status" value="ALT_SEQ"/>
    <property type="molecule type" value="Genomic_DNA"/>
</dbReference>
<dbReference type="EMBL" id="CP002684">
    <property type="protein sequence ID" value="AEE35960.1"/>
    <property type="molecule type" value="Genomic_DNA"/>
</dbReference>
<dbReference type="EMBL" id="AK221916">
    <property type="protein sequence ID" value="BAD94318.1"/>
    <property type="status" value="ALT_INIT"/>
    <property type="molecule type" value="mRNA"/>
</dbReference>
<dbReference type="PIR" id="T00458">
    <property type="entry name" value="T00458"/>
</dbReference>
<dbReference type="RefSeq" id="NP_177854.6">
    <molecule id="Q2LAE1-2"/>
    <property type="nucleotide sequence ID" value="NM_106379.9"/>
</dbReference>
<dbReference type="PDB" id="2L7P">
    <property type="method" value="NMR"/>
    <property type="chains" value="A=849-937"/>
</dbReference>
<dbReference type="PDB" id="5YVX">
    <property type="method" value="X-ray"/>
    <property type="resolution" value="1.59 A"/>
    <property type="chains" value="A=862-921"/>
</dbReference>
<dbReference type="PDB" id="6QXZ">
    <property type="method" value="NMR"/>
    <property type="chains" value="A=861-928"/>
</dbReference>
<dbReference type="PDBsum" id="2L7P"/>
<dbReference type="PDBsum" id="5YVX"/>
<dbReference type="PDBsum" id="6QXZ"/>
<dbReference type="BMRB" id="Q2LAE1"/>
<dbReference type="SMR" id="Q2LAE1"/>
<dbReference type="BioGRID" id="29285">
    <property type="interactions" value="15"/>
</dbReference>
<dbReference type="FunCoup" id="Q2LAE1">
    <property type="interactions" value="695"/>
</dbReference>
<dbReference type="IntAct" id="Q2LAE1">
    <property type="interactions" value="2"/>
</dbReference>
<dbReference type="MINT" id="Q2LAE1"/>
<dbReference type="STRING" id="3702.Q2LAE1"/>
<dbReference type="iPTMnet" id="Q2LAE1"/>
<dbReference type="PaxDb" id="3702-AT1G77300.1"/>
<dbReference type="ProteomicsDB" id="246681">
    <molecule id="Q2LAE1-1"/>
</dbReference>
<dbReference type="EnsemblPlants" id="AT1G77300.1">
    <molecule id="Q2LAE1-2"/>
    <property type="protein sequence ID" value="AT1G77300.1"/>
    <property type="gene ID" value="AT1G77300"/>
</dbReference>
<dbReference type="GeneID" id="844066"/>
<dbReference type="Gramene" id="AT1G77300.1">
    <molecule id="Q2LAE1-2"/>
    <property type="protein sequence ID" value="AT1G77300.1"/>
    <property type="gene ID" value="AT1G77300"/>
</dbReference>
<dbReference type="KEGG" id="ath:AT1G77300"/>
<dbReference type="Araport" id="AT1G77300"/>
<dbReference type="TAIR" id="AT1G77300">
    <property type="gene designation" value="EFS"/>
</dbReference>
<dbReference type="eggNOG" id="KOG4442">
    <property type="taxonomic scope" value="Eukaryota"/>
</dbReference>
<dbReference type="InParanoid" id="Q2LAE1"/>
<dbReference type="OMA" id="HQFGSPG"/>
<dbReference type="PhylomeDB" id="Q2LAE1"/>
<dbReference type="BRENDA" id="2.1.1.359">
    <property type="organism ID" value="399"/>
</dbReference>
<dbReference type="EvolutionaryTrace" id="Q2LAE1"/>
<dbReference type="PRO" id="PR:Q2LAE1"/>
<dbReference type="Proteomes" id="UP000006548">
    <property type="component" value="Chromosome 1"/>
</dbReference>
<dbReference type="ExpressionAtlas" id="Q2LAE1">
    <property type="expression patterns" value="baseline and differential"/>
</dbReference>
<dbReference type="GO" id="GO:0000775">
    <property type="term" value="C:chromosome, centromeric region"/>
    <property type="evidence" value="ECO:0007669"/>
    <property type="project" value="UniProtKB-SubCell"/>
</dbReference>
<dbReference type="GO" id="GO:0005634">
    <property type="term" value="C:nucleus"/>
    <property type="evidence" value="ECO:0000314"/>
    <property type="project" value="TAIR"/>
</dbReference>
<dbReference type="GO" id="GO:0042800">
    <property type="term" value="F:histone H3K4 methyltransferase activity"/>
    <property type="evidence" value="ECO:0000314"/>
    <property type="project" value="TAIR"/>
</dbReference>
<dbReference type="GO" id="GO:0032183">
    <property type="term" value="F:SUMO binding"/>
    <property type="evidence" value="ECO:0000353"/>
    <property type="project" value="TAIR"/>
</dbReference>
<dbReference type="GO" id="GO:0008270">
    <property type="term" value="F:zinc ion binding"/>
    <property type="evidence" value="ECO:0007669"/>
    <property type="project" value="UniProtKB-KW"/>
</dbReference>
<dbReference type="GO" id="GO:0048653">
    <property type="term" value="P:anther development"/>
    <property type="evidence" value="ECO:0000315"/>
    <property type="project" value="TAIR"/>
</dbReference>
<dbReference type="GO" id="GO:0016116">
    <property type="term" value="P:carotenoid metabolic process"/>
    <property type="evidence" value="ECO:0000315"/>
    <property type="project" value="TAIR"/>
</dbReference>
<dbReference type="GO" id="GO:0009553">
    <property type="term" value="P:embryo sac development"/>
    <property type="evidence" value="ECO:0000315"/>
    <property type="project" value="TAIR"/>
</dbReference>
<dbReference type="GO" id="GO:0040029">
    <property type="term" value="P:epigenetic regulation of gene expression"/>
    <property type="evidence" value="ECO:0000315"/>
    <property type="project" value="TAIR"/>
</dbReference>
<dbReference type="GO" id="GO:0032259">
    <property type="term" value="P:methylation"/>
    <property type="evidence" value="ECO:0007669"/>
    <property type="project" value="UniProtKB-KW"/>
</dbReference>
<dbReference type="GO" id="GO:0009910">
    <property type="term" value="P:negative regulation of flower development"/>
    <property type="evidence" value="ECO:0000315"/>
    <property type="project" value="TAIR"/>
</dbReference>
<dbReference type="GO" id="GO:0048481">
    <property type="term" value="P:plant ovule development"/>
    <property type="evidence" value="ECO:0000315"/>
    <property type="project" value="TAIR"/>
</dbReference>
<dbReference type="GO" id="GO:0009555">
    <property type="term" value="P:pollen development"/>
    <property type="evidence" value="ECO:0000315"/>
    <property type="project" value="TAIR"/>
</dbReference>
<dbReference type="GO" id="GO:0010363">
    <property type="term" value="P:regulation of plant-type hypersensitive response"/>
    <property type="evidence" value="ECO:0000315"/>
    <property type="project" value="TAIR"/>
</dbReference>
<dbReference type="GO" id="GO:0043067">
    <property type="term" value="P:regulation of programmed cell death"/>
    <property type="evidence" value="ECO:0000316"/>
    <property type="project" value="TAIR"/>
</dbReference>
<dbReference type="GO" id="GO:0090548">
    <property type="term" value="P:response to nitrate starvation"/>
    <property type="evidence" value="ECO:0000315"/>
    <property type="project" value="TAIR"/>
</dbReference>
<dbReference type="GO" id="GO:0010223">
    <property type="term" value="P:secondary shoot formation"/>
    <property type="evidence" value="ECO:0000315"/>
    <property type="project" value="TAIR"/>
</dbReference>
<dbReference type="CDD" id="cd19172">
    <property type="entry name" value="SET_SETD2"/>
    <property type="match status" value="1"/>
</dbReference>
<dbReference type="FunFam" id="2.170.270.10:FF:000035">
    <property type="entry name" value="Histone-lysine N-methyltransferase"/>
    <property type="match status" value="1"/>
</dbReference>
<dbReference type="Gene3D" id="3.30.40.100">
    <property type="match status" value="1"/>
</dbReference>
<dbReference type="Gene3D" id="2.170.270.10">
    <property type="entry name" value="SET domain"/>
    <property type="match status" value="1"/>
</dbReference>
<dbReference type="InterPro" id="IPR006560">
    <property type="entry name" value="AWS_dom"/>
</dbReference>
<dbReference type="InterPro" id="IPR003616">
    <property type="entry name" value="Post-SET_dom"/>
</dbReference>
<dbReference type="InterPro" id="IPR050777">
    <property type="entry name" value="SET2_Histone-Lys_MeTrsfase"/>
</dbReference>
<dbReference type="InterPro" id="IPR001214">
    <property type="entry name" value="SET_dom"/>
</dbReference>
<dbReference type="InterPro" id="IPR046341">
    <property type="entry name" value="SET_dom_sf"/>
</dbReference>
<dbReference type="InterPro" id="IPR044437">
    <property type="entry name" value="SETD2/Set2_SET"/>
</dbReference>
<dbReference type="InterPro" id="IPR011124">
    <property type="entry name" value="Znf_CW"/>
</dbReference>
<dbReference type="PANTHER" id="PTHR22884">
    <property type="entry name" value="SET DOMAIN PROTEINS"/>
    <property type="match status" value="1"/>
</dbReference>
<dbReference type="Pfam" id="PF17907">
    <property type="entry name" value="AWS"/>
    <property type="match status" value="1"/>
</dbReference>
<dbReference type="Pfam" id="PF00856">
    <property type="entry name" value="SET"/>
    <property type="match status" value="1"/>
</dbReference>
<dbReference type="Pfam" id="PF07496">
    <property type="entry name" value="zf-CW"/>
    <property type="match status" value="1"/>
</dbReference>
<dbReference type="SMART" id="SM00570">
    <property type="entry name" value="AWS"/>
    <property type="match status" value="1"/>
</dbReference>
<dbReference type="SMART" id="SM00508">
    <property type="entry name" value="PostSET"/>
    <property type="match status" value="1"/>
</dbReference>
<dbReference type="SMART" id="SM00317">
    <property type="entry name" value="SET"/>
    <property type="match status" value="1"/>
</dbReference>
<dbReference type="SUPFAM" id="SSF82199">
    <property type="entry name" value="SET domain"/>
    <property type="match status" value="1"/>
</dbReference>
<dbReference type="PROSITE" id="PS51215">
    <property type="entry name" value="AWS"/>
    <property type="match status" value="1"/>
</dbReference>
<dbReference type="PROSITE" id="PS50868">
    <property type="entry name" value="POST_SET"/>
    <property type="match status" value="1"/>
</dbReference>
<dbReference type="PROSITE" id="PS50280">
    <property type="entry name" value="SET"/>
    <property type="match status" value="1"/>
</dbReference>
<dbReference type="PROSITE" id="PS51050">
    <property type="entry name" value="ZF_CW"/>
    <property type="match status" value="1"/>
</dbReference>
<evidence type="ECO:0000255" key="1">
    <source>
        <dbReference type="PROSITE-ProRule" id="PRU00155"/>
    </source>
</evidence>
<evidence type="ECO:0000255" key="2">
    <source>
        <dbReference type="PROSITE-ProRule" id="PRU00190"/>
    </source>
</evidence>
<evidence type="ECO:0000255" key="3">
    <source>
        <dbReference type="PROSITE-ProRule" id="PRU00454"/>
    </source>
</evidence>
<evidence type="ECO:0000255" key="4">
    <source>
        <dbReference type="PROSITE-ProRule" id="PRU00562"/>
    </source>
</evidence>
<evidence type="ECO:0000256" key="5">
    <source>
        <dbReference type="SAM" id="MobiDB-lite"/>
    </source>
</evidence>
<evidence type="ECO:0000269" key="6">
    <source>
    </source>
</evidence>
<evidence type="ECO:0000269" key="7">
    <source>
    </source>
</evidence>
<evidence type="ECO:0000269" key="8">
    <source>
    </source>
</evidence>
<evidence type="ECO:0000269" key="9">
    <source>
    </source>
</evidence>
<evidence type="ECO:0000269" key="10">
    <source>
    </source>
</evidence>
<evidence type="ECO:0000269" key="11">
    <source>
    </source>
</evidence>
<evidence type="ECO:0000269" key="12">
    <source>
    </source>
</evidence>
<evidence type="ECO:0000269" key="13">
    <source>
    </source>
</evidence>
<evidence type="ECO:0000269" key="14">
    <source>
    </source>
</evidence>
<evidence type="ECO:0000269" key="15">
    <source>
    </source>
</evidence>
<evidence type="ECO:0000269" key="16">
    <source>
    </source>
</evidence>
<evidence type="ECO:0000303" key="17">
    <source>
    </source>
</evidence>
<evidence type="ECO:0000303" key="18">
    <source>
    </source>
</evidence>
<evidence type="ECO:0000303" key="19">
    <source ref="4"/>
</evidence>
<evidence type="ECO:0000305" key="20"/>
<evidence type="ECO:0000305" key="21">
    <source>
    </source>
</evidence>
<evidence type="ECO:0007829" key="22">
    <source>
        <dbReference type="PDB" id="2L7P"/>
    </source>
</evidence>
<evidence type="ECO:0007829" key="23">
    <source>
        <dbReference type="PDB" id="5YVX"/>
    </source>
</evidence>
<evidence type="ECO:0007829" key="24">
    <source>
        <dbReference type="PDB" id="6QXZ"/>
    </source>
</evidence>
<protein>
    <recommendedName>
        <fullName>Histone-lysine N-methyltransferase ASHH2</fullName>
        <ecNumber>2.1.1.-</ecNumber>
    </recommendedName>
    <alternativeName>
        <fullName evidence="17">ASH1 homolog 2</fullName>
    </alternativeName>
    <alternativeName>
        <fullName>H3-K4-HMTase</fullName>
    </alternativeName>
    <alternativeName>
        <fullName>Histone H3-K36 methyltransferase 8</fullName>
        <shortName>H3-K36-HMTase 8</shortName>
    </alternativeName>
    <alternativeName>
        <fullName>Protein EARLY FLOWERING IN SHORT DAYS</fullName>
    </alternativeName>
    <alternativeName>
        <fullName evidence="18">Protein LAZARUS 2</fullName>
    </alternativeName>
    <alternativeName>
        <fullName>Protein SET DOMAIN GROUP 8</fullName>
    </alternativeName>
</protein>
<organism>
    <name type="scientific">Arabidopsis thaliana</name>
    <name type="common">Mouse-ear cress</name>
    <dbReference type="NCBI Taxonomy" id="3702"/>
    <lineage>
        <taxon>Eukaryota</taxon>
        <taxon>Viridiplantae</taxon>
        <taxon>Streptophyta</taxon>
        <taxon>Embryophyta</taxon>
        <taxon>Tracheophyta</taxon>
        <taxon>Spermatophyta</taxon>
        <taxon>Magnoliopsida</taxon>
        <taxon>eudicotyledons</taxon>
        <taxon>Gunneridae</taxon>
        <taxon>Pentapetalae</taxon>
        <taxon>rosids</taxon>
        <taxon>malvids</taxon>
        <taxon>Brassicales</taxon>
        <taxon>Brassicaceae</taxon>
        <taxon>Camelineae</taxon>
        <taxon>Arabidopsis</taxon>
    </lineage>
</organism>
<sequence>MDCKENGVGDASGCNIDANSLASNLAMNTNEDFYEKLSSRGQNLDSVSSLEIPQTASSVNHTIEGQRKCFTEIEQMGYGNSNSQEDAGNTDDDLYVCYNADDTQEQGVVSGELEQSQELICDTDLLVNCNKLDDGKESQDTNVSLVSIFSGSMQEKEAPQAKEDEGYGGTTLPIGGSGIDTESTFVNDAPEQFESLETTKHIKPDEVESDGISYRFDDGGKEGRNGPSSDLDTGSSDDISLSQSFSFPDSLLDSSVFGCSATESYLEDAIDIEGNGTIVVSPSLAITEMLNNDDGGLCSHDLNKITVTETINPDLKLVREDRLDTDLSVMNEKMLKNHVGDSSSESAVAALSMNNGMAADLRAENFSQSSPIDEKTLDMEANSPITDSSLIWNFPLNFGSGGIEVCNPENAVEPLRIVDDNGRIGGEVASASGSDFCEAGMSSSRRKARDGKQCKVVQTKTSARHLRKSSRKKQSERDIESIFKCSKQKRSSLLKTSRSSEWGLPSKTTEIFLQSNNIPYDGPPHHEPQRSQGNLNNGEHNRSSHNGNVEGSNRNIQASSGSCLRLKVKFGKSGGQNPLNITVSKVSGNSLPGNGIVKAGTCLELPGSAHFGEDKMQTVETKEDLVEKSNPVEKVSYLQSSDSMRDKKYNQDAGGLCRKVGGDVLDDDPHLSSIRMVEECERATGTQSLDAETSPDSEVINSVPDSIVNIEHKEGLHHGFFSTPEDVVKKNRVLEKEDELRASKSPSENGSHLIPNAKKAKHPKSKSNGTKKGKSKFSESAKDGRKNESHEGVEQRKSLNTSMGRDDSDYPEVGRIESHKTTGALLDADIGKTSATYGTISSDVTHGEMVVDVTIEDSYSTESAWVRCDDCFKWRRIPASVVGSIDESSRWICMNNSDKRFADCSKSQEMSNEEINEELGIGQDEADAYDCDAAKRGKEKEQKSKRLTGKQKACFKAIKTNQFLHRNRKSQTIDEIMVCHCKPSPDGRLGCGEECLNRMLNIECLQGTCPAGDLCSNQQFQKRKYVKFERFQSGKKGYGLRLLEDVREGQFLIEYVGEVLDMQSYETRQKEYAFKGQKHFYFMTLNGNEVIDAGAKGNLGRFINHSCEPNCRTEKWMVNGEICVGIFSMQDLKKGQELTFDYNYVRVFGAAAKKCYCGSSHCRGYIGGDPLNGDVIIQSDSDEEYPELVILDDDESGEGILGATSRTFTDDADEQMPQSFEKVNGYKDLAPDNTQTQSSVSVKLPEREIPPPLLQPTEVLKELSSGISITAVQQEVPAEKKTKSTSPTSSSLSRMSPGGTNSDKTTKHGSGEDKKILPRPRPRMKTSRSSESSKRDKGGIYPGVNKAQVIPVNKLQQQPIKSKGSEKVSPSIETFEGKLNELLDAVGGISKRRDSAKGYLKLLLLTAASRGTDEEGIYSNRDLSMILDALLKTKSKSVLVDIINKNGPFAGMESFKDSVLSFTEHDDYTVHNIARSFRDRWIPKHFRKPWRINREERSESMRSPINRRFRASQEPRYDHQSPRPAEPAASVTSSKAATPETASVSEGYSEPNSGLPETNGRKRKSRWDQPSKTKEQRIMTILSQQTDETNGNQDVQDDLPPGFSSPCTDVPDAITAQPQQKFLSRLPVSYGIPLSIVHQFGSPGKEDPTTWSVAPGMPFYPFPPLPPVSHGEFFAKRNVRACSSSMGNLTYSNEILPATPVTDSTAPTRKRELFSSDIGTTYFRQQKQSVPPWLRNNGGEKTANSPIPGNLTLEKKLNS</sequence>
<accession>Q2LAE1</accession>
<accession>A9QA57</accession>
<accession>O80663</accession>
<accession>Q56WW4</accession>
<gene>
    <name evidence="17" type="primary">ASHH2</name>
    <name type="synonym">EFS</name>
    <name evidence="18" type="synonym">LAZ2</name>
    <name type="synonym">SDG8</name>
    <name type="synonym">SET8</name>
    <name type="ordered locus">At1g77300</name>
    <name type="ORF">T14N5.15</name>
</gene>
<feature type="chain" id="PRO_0000233371" description="Histone-lysine N-methyltransferase ASHH2">
    <location>
        <begin position="1"/>
        <end position="1759"/>
    </location>
</feature>
<feature type="domain" description="AWS" evidence="4">
    <location>
        <begin position="974"/>
        <end position="1024"/>
    </location>
</feature>
<feature type="domain" description="SET" evidence="2">
    <location>
        <begin position="1026"/>
        <end position="1143"/>
    </location>
</feature>
<feature type="domain" description="Post-SET" evidence="1">
    <location>
        <begin position="1151"/>
        <end position="1167"/>
    </location>
</feature>
<feature type="zinc finger region" description="CW-type" evidence="3">
    <location>
        <begin position="859"/>
        <end position="912"/>
    </location>
</feature>
<feature type="region of interest" description="Disordered" evidence="5">
    <location>
        <begin position="154"/>
        <end position="181"/>
    </location>
</feature>
<feature type="region of interest" description="Disordered" evidence="5">
    <location>
        <begin position="197"/>
        <end position="237"/>
    </location>
</feature>
<feature type="region of interest" description="Disordered" evidence="5">
    <location>
        <begin position="437"/>
        <end position="482"/>
    </location>
</feature>
<feature type="region of interest" description="Disordered" evidence="5">
    <location>
        <begin position="515"/>
        <end position="556"/>
    </location>
</feature>
<feature type="region of interest" description="Disordered" evidence="5">
    <location>
        <begin position="738"/>
        <end position="816"/>
    </location>
</feature>
<feature type="region of interest" description="Disordered" evidence="5">
    <location>
        <begin position="1225"/>
        <end position="1253"/>
    </location>
</feature>
<feature type="region of interest" description="Disordered" evidence="5">
    <location>
        <begin position="1271"/>
        <end position="1345"/>
    </location>
</feature>
<feature type="region of interest" description="Disordered" evidence="5">
    <location>
        <begin position="1496"/>
        <end position="1606"/>
    </location>
</feature>
<feature type="region of interest" description="Disordered" evidence="5">
    <location>
        <begin position="1727"/>
        <end position="1759"/>
    </location>
</feature>
<feature type="compositionally biased region" description="Basic and acidic residues" evidence="5">
    <location>
        <begin position="154"/>
        <end position="165"/>
    </location>
</feature>
<feature type="compositionally biased region" description="Basic and acidic residues" evidence="5">
    <location>
        <begin position="197"/>
        <end position="206"/>
    </location>
</feature>
<feature type="compositionally biased region" description="Basic and acidic residues" evidence="5">
    <location>
        <begin position="215"/>
        <end position="224"/>
    </location>
</feature>
<feature type="compositionally biased region" description="Basic residues" evidence="5">
    <location>
        <begin position="462"/>
        <end position="472"/>
    </location>
</feature>
<feature type="compositionally biased region" description="Polar residues" evidence="5">
    <location>
        <begin position="530"/>
        <end position="556"/>
    </location>
</feature>
<feature type="compositionally biased region" description="Basic residues" evidence="5">
    <location>
        <begin position="758"/>
        <end position="775"/>
    </location>
</feature>
<feature type="compositionally biased region" description="Basic and acidic residues" evidence="5">
    <location>
        <begin position="776"/>
        <end position="797"/>
    </location>
</feature>
<feature type="compositionally biased region" description="Basic and acidic residues" evidence="5">
    <location>
        <begin position="804"/>
        <end position="816"/>
    </location>
</feature>
<feature type="compositionally biased region" description="Polar residues" evidence="5">
    <location>
        <begin position="1232"/>
        <end position="1241"/>
    </location>
</feature>
<feature type="compositionally biased region" description="Low complexity" evidence="5">
    <location>
        <begin position="1284"/>
        <end position="1293"/>
    </location>
</feature>
<feature type="compositionally biased region" description="Basic and acidic residues" evidence="5">
    <location>
        <begin position="1304"/>
        <end position="1316"/>
    </location>
</feature>
<feature type="compositionally biased region" description="Basic residues" evidence="5">
    <location>
        <begin position="1317"/>
        <end position="1326"/>
    </location>
</feature>
<feature type="compositionally biased region" description="Basic and acidic residues" evidence="5">
    <location>
        <begin position="1511"/>
        <end position="1521"/>
    </location>
</feature>
<feature type="compositionally biased region" description="Polar residues" evidence="5">
    <location>
        <begin position="1530"/>
        <end position="1556"/>
    </location>
</feature>
<feature type="compositionally biased region" description="Basic and acidic residues" evidence="5">
    <location>
        <begin position="1566"/>
        <end position="1577"/>
    </location>
</feature>
<feature type="compositionally biased region" description="Polar residues" evidence="5">
    <location>
        <begin position="1581"/>
        <end position="1594"/>
    </location>
</feature>
<feature type="binding site" evidence="3 15">
    <location>
        <position position="868"/>
    </location>
    <ligand>
        <name>Zn(2+)</name>
        <dbReference type="ChEBI" id="CHEBI:29105"/>
    </ligand>
</feature>
<feature type="binding site" evidence="3 15">
    <location>
        <position position="871"/>
    </location>
    <ligand>
        <name>Zn(2+)</name>
        <dbReference type="ChEBI" id="CHEBI:29105"/>
    </ligand>
</feature>
<feature type="binding site" evidence="3 15">
    <location>
        <position position="893"/>
    </location>
    <ligand>
        <name>Zn(2+)</name>
        <dbReference type="ChEBI" id="CHEBI:29105"/>
    </ligand>
</feature>
<feature type="binding site" evidence="3 15">
    <location>
        <position position="904"/>
    </location>
    <ligand>
        <name>Zn(2+)</name>
        <dbReference type="ChEBI" id="CHEBI:29105"/>
    </ligand>
</feature>
<feature type="binding site" evidence="2">
    <location>
        <position position="1142"/>
    </location>
    <ligand>
        <name>S-adenosyl-L-methionine</name>
        <dbReference type="ChEBI" id="CHEBI:59789"/>
    </ligand>
</feature>
<feature type="splice variant" id="VSP_018133" description="In isoform 2." evidence="19">
    <original>G</original>
    <variation>GLQMLHNIMKQYRGDFKRIPIIRKLLKVLEYLATRKILALEHIIRRP</variation>
    <location>
        <position position="1447"/>
    </location>
</feature>
<feature type="mutagenesis site" description="Loss of histone tail binding." evidence="15">
    <original>W</original>
    <variation>A</variation>
    <location>
        <position position="865"/>
    </location>
</feature>
<feature type="mutagenesis site" description="Loss of histone tail binding." evidence="15">
    <original>W</original>
    <variation>A</variation>
    <location>
        <position position="874"/>
    </location>
</feature>
<feature type="mutagenesis site" description="Loss of histone tail binding." evidence="15">
    <original>W</original>
    <variation>A</variation>
    <location>
        <position position="891"/>
    </location>
</feature>
<feature type="mutagenesis site" description="Loss of histone tail binding." evidence="15">
    <original>Q</original>
    <variation>A</variation>
    <location>
        <position position="908"/>
    </location>
</feature>
<feature type="mutagenesis site" description="Loss of histone tail binding." evidence="15">
    <original>E</original>
    <variation>A</variation>
    <location>
        <position position="909"/>
    </location>
</feature>
<feature type="sequence conflict" description="In Ref. 4; BAD94318." evidence="20" ref="4">
    <original>I</original>
    <variation>T</variation>
    <location>
        <position position="1426"/>
    </location>
</feature>
<feature type="strand" evidence="23">
    <location>
        <begin position="863"/>
        <end position="867"/>
    </location>
</feature>
<feature type="turn" evidence="23">
    <location>
        <begin position="869"/>
        <end position="871"/>
    </location>
</feature>
<feature type="strand" evidence="23">
    <location>
        <begin position="874"/>
        <end position="878"/>
    </location>
</feature>
<feature type="helix" evidence="23">
    <location>
        <begin position="879"/>
        <end position="882"/>
    </location>
</feature>
<feature type="helix" evidence="23">
    <location>
        <begin position="893"/>
        <end position="895"/>
    </location>
</feature>
<feature type="strand" evidence="22">
    <location>
        <begin position="899"/>
        <end position="901"/>
    </location>
</feature>
<feature type="helix" evidence="23">
    <location>
        <begin position="912"/>
        <end position="919"/>
    </location>
</feature>
<feature type="turn" evidence="24">
    <location>
        <begin position="923"/>
        <end position="926"/>
    </location>
</feature>
<reference key="1">
    <citation type="journal article" date="2005" name="Nat. Cell Biol.">
        <title>Prevention of early flowering by expression of FLOWERING LOCUS C requires methylation of histone H3 K36.</title>
        <authorList>
            <person name="Zhao Z."/>
            <person name="Yu Y."/>
            <person name="Meyer D."/>
            <person name="Wu C."/>
            <person name="Shen W.-H."/>
        </authorList>
    </citation>
    <scope>NUCLEOTIDE SEQUENCE [MRNA] (ISOFORMS 1 AND 2)</scope>
    <scope>FUNCTION</scope>
    <scope>TISSUE SPECIFICITY</scope>
</reference>
<reference key="2">
    <citation type="journal article" date="2000" name="Nature">
        <title>Sequence and analysis of chromosome 1 of the plant Arabidopsis thaliana.</title>
        <authorList>
            <person name="Theologis A."/>
            <person name="Ecker J.R."/>
            <person name="Palm C.J."/>
            <person name="Federspiel N.A."/>
            <person name="Kaul S."/>
            <person name="White O."/>
            <person name="Alonso J."/>
            <person name="Altafi H."/>
            <person name="Araujo R."/>
            <person name="Bowman C.L."/>
            <person name="Brooks S.Y."/>
            <person name="Buehler E."/>
            <person name="Chan A."/>
            <person name="Chao Q."/>
            <person name="Chen H."/>
            <person name="Cheuk R.F."/>
            <person name="Chin C.W."/>
            <person name="Chung M.K."/>
            <person name="Conn L."/>
            <person name="Conway A.B."/>
            <person name="Conway A.R."/>
            <person name="Creasy T.H."/>
            <person name="Dewar K."/>
            <person name="Dunn P."/>
            <person name="Etgu P."/>
            <person name="Feldblyum T.V."/>
            <person name="Feng J.-D."/>
            <person name="Fong B."/>
            <person name="Fujii C.Y."/>
            <person name="Gill J.E."/>
            <person name="Goldsmith A.D."/>
            <person name="Haas B."/>
            <person name="Hansen N.F."/>
            <person name="Hughes B."/>
            <person name="Huizar L."/>
            <person name="Hunter J.L."/>
            <person name="Jenkins J."/>
            <person name="Johnson-Hopson C."/>
            <person name="Khan S."/>
            <person name="Khaykin E."/>
            <person name="Kim C.J."/>
            <person name="Koo H.L."/>
            <person name="Kremenetskaia I."/>
            <person name="Kurtz D.B."/>
            <person name="Kwan A."/>
            <person name="Lam B."/>
            <person name="Langin-Hooper S."/>
            <person name="Lee A."/>
            <person name="Lee J.M."/>
            <person name="Lenz C.A."/>
            <person name="Li J.H."/>
            <person name="Li Y.-P."/>
            <person name="Lin X."/>
            <person name="Liu S.X."/>
            <person name="Liu Z.A."/>
            <person name="Luros J.S."/>
            <person name="Maiti R."/>
            <person name="Marziali A."/>
            <person name="Militscher J."/>
            <person name="Miranda M."/>
            <person name="Nguyen M."/>
            <person name="Nierman W.C."/>
            <person name="Osborne B.I."/>
            <person name="Pai G."/>
            <person name="Peterson J."/>
            <person name="Pham P.K."/>
            <person name="Rizzo M."/>
            <person name="Rooney T."/>
            <person name="Rowley D."/>
            <person name="Sakano H."/>
            <person name="Salzberg S.L."/>
            <person name="Schwartz J.R."/>
            <person name="Shinn P."/>
            <person name="Southwick A.M."/>
            <person name="Sun H."/>
            <person name="Tallon L.J."/>
            <person name="Tambunga G."/>
            <person name="Toriumi M.J."/>
            <person name="Town C.D."/>
            <person name="Utterback T."/>
            <person name="Van Aken S."/>
            <person name="Vaysberg M."/>
            <person name="Vysotskaia V.S."/>
            <person name="Walker M."/>
            <person name="Wu D."/>
            <person name="Yu G."/>
            <person name="Fraser C.M."/>
            <person name="Venter J.C."/>
            <person name="Davis R.W."/>
        </authorList>
    </citation>
    <scope>NUCLEOTIDE SEQUENCE [LARGE SCALE GENOMIC DNA]</scope>
    <source>
        <strain>cv. Columbia</strain>
    </source>
</reference>
<reference key="3">
    <citation type="journal article" date="2017" name="Plant J.">
        <title>Araport11: a complete reannotation of the Arabidopsis thaliana reference genome.</title>
        <authorList>
            <person name="Cheng C.Y."/>
            <person name="Krishnakumar V."/>
            <person name="Chan A.P."/>
            <person name="Thibaud-Nissen F."/>
            <person name="Schobel S."/>
            <person name="Town C.D."/>
        </authorList>
    </citation>
    <scope>GENOME REANNOTATION</scope>
    <source>
        <strain>cv. Columbia</strain>
    </source>
</reference>
<reference key="4">
    <citation type="submission" date="2005-03" db="EMBL/GenBank/DDBJ databases">
        <title>Large-scale analysis of RIKEN Arabidopsis full-length (RAFL) cDNAs.</title>
        <authorList>
            <person name="Totoki Y."/>
            <person name="Seki M."/>
            <person name="Ishida J."/>
            <person name="Nakajima M."/>
            <person name="Enju A."/>
            <person name="Kamiya A."/>
            <person name="Narusaka M."/>
            <person name="Shin-i T."/>
            <person name="Nakagawa M."/>
            <person name="Sakamoto N."/>
            <person name="Oishi K."/>
            <person name="Kohara Y."/>
            <person name="Kobayashi M."/>
            <person name="Toyoda A."/>
            <person name="Sakaki Y."/>
            <person name="Sakurai T."/>
            <person name="Iida K."/>
            <person name="Akiyama K."/>
            <person name="Satou M."/>
            <person name="Toyoda T."/>
            <person name="Konagaya A."/>
            <person name="Carninci P."/>
            <person name="Kawai J."/>
            <person name="Hayashizaki Y."/>
            <person name="Shinozaki K."/>
        </authorList>
    </citation>
    <scope>NUCLEOTIDE SEQUENCE [LARGE SCALE MRNA] OF 1299-1759 (ISOFORM 2)</scope>
    <source>
        <strain>cv. Columbia</strain>
    </source>
</reference>
<reference key="5">
    <citation type="journal article" date="2001" name="Nucleic Acids Res.">
        <title>The Arabidopsis thaliana genome contains at least 29 active genes encoding SET domain proteins that can be assigned to four evolutionarily conserved classes.</title>
        <authorList>
            <person name="Baumbusch L.O."/>
            <person name="Thorstensen T."/>
            <person name="Krauss V."/>
            <person name="Fischer A."/>
            <person name="Naumann K."/>
            <person name="Assalkhou R."/>
            <person name="Schulz I."/>
            <person name="Reuter G."/>
            <person name="Aalen R.B."/>
        </authorList>
    </citation>
    <scope>NOMENCLATURE</scope>
</reference>
<reference key="6">
    <citation type="journal article" date="1999" name="Development">
        <title>The early-flowering mutant efs is involved in the autonomous promotion pathway of Arabidopsis thaliana.</title>
        <authorList>
            <person name="Soppe W.J.J."/>
            <person name="Bentsink L."/>
            <person name="Koornneef M."/>
        </authorList>
    </citation>
    <scope>FUNCTION</scope>
</reference>
<reference key="7">
    <citation type="journal article" date="2005" name="Plant Cell">
        <title>Establishment of the vernalization-responsive, winter-annual habit in Arabidopsis requires a putative histone H3 methyl transferase.</title>
        <authorList>
            <person name="Kim S.Y."/>
            <person name="He Y."/>
            <person name="Jacob Y."/>
            <person name="Noh Y.-S."/>
            <person name="Michaels S."/>
            <person name="Amasino R."/>
        </authorList>
    </citation>
    <scope>FUNCTION</scope>
    <scope>TISSUE SPECIFICITY</scope>
</reference>
<reference key="8">
    <citation type="journal article" date="2008" name="Mol. Cell. Biol.">
        <title>Di- and tri- but not monomethylation on histone H3 lysine 36 marks active transcription of genes involved in flowering time regulation and other processes in Arabidopsis thaliana.</title>
        <authorList>
            <person name="Xu L."/>
            <person name="Zhao Z."/>
            <person name="Dong A."/>
            <person name="Soubigou-Taconnat L."/>
            <person name="Renou J.P."/>
            <person name="Steinmetz A."/>
            <person name="Shen W.H."/>
        </authorList>
    </citation>
    <scope>FUNCTION</scope>
    <scope>SUBCELLULAR LOCATION</scope>
    <scope>DISRUPTION PHENOTYPE</scope>
</reference>
<reference key="9">
    <citation type="journal article" date="2009" name="Plant J.">
        <title>Resetting and regulation of Flowering Locus C expression during Arabidopsis reproductive development.</title>
        <authorList>
            <person name="Choi J."/>
            <person name="Hyun Y."/>
            <person name="Kang M.J."/>
            <person name="In Yun H."/>
            <person name="Yun J.Y."/>
            <person name="Lister C."/>
            <person name="Dean C."/>
            <person name="Amasino R.M."/>
            <person name="Noh B."/>
            <person name="Noh Y.S."/>
            <person name="Choi Y."/>
        </authorList>
    </citation>
    <scope>INDUCTION BY VERNALIZATION</scope>
    <scope>TISSUE SPECIFICITY</scope>
</reference>
<reference key="10">
    <citation type="journal article" date="2009" name="PLoS ONE">
        <title>The ASH1 HOMOLOG 2 (ASHH2) histone H3 methyltransferase is required for ovule and anther development in Arabidopsis.</title>
        <authorList>
            <person name="Grini P.E."/>
            <person name="Thorstensen T."/>
            <person name="Alm V."/>
            <person name="Vizcay-Barrena G."/>
            <person name="Windju S.S."/>
            <person name="Jorstad T.S."/>
            <person name="Wilson Z.A."/>
            <person name="Aalen R.B."/>
        </authorList>
    </citation>
    <scope>FUNCTION</scope>
    <scope>TISSUE SPECIFICITY</scope>
    <scope>DISRUPTION PHENOTYPE</scope>
</reference>
<reference key="11">
    <citation type="journal article" date="2010" name="EMBO J.">
        <title>Growth habit determination by the balance of histone methylation activities in Arabidopsis.</title>
        <authorList>
            <person name="Ko J.H."/>
            <person name="Mitina I."/>
            <person name="Tamada Y."/>
            <person name="Hyun Y."/>
            <person name="Choi Y."/>
            <person name="Amasino R.M."/>
            <person name="Noh B."/>
            <person name="Noh Y.S."/>
        </authorList>
    </citation>
    <scope>FUNCTION</scope>
    <scope>INTERACTION WITH FRI AND SUF4</scope>
</reference>
<reference key="12">
    <citation type="journal article" date="2010" name="PLoS Pathog.">
        <title>Autoimmunity in Arabidopsis acd11 is mediated by epigenetic regulation of an immune receptor.</title>
        <authorList>
            <person name="Palma K."/>
            <person name="Thorgrimsen S."/>
            <person name="Malinovsky F.G."/>
            <person name="Fiil B.K."/>
            <person name="Nielsen H.B."/>
            <person name="Brodersen P."/>
            <person name="Hofius D."/>
            <person name="Petersen M."/>
            <person name="Mundy J."/>
        </authorList>
    </citation>
    <scope>FUNCTION</scope>
</reference>
<reference key="13">
    <citation type="journal article" date="2011" name="Plant Cell">
        <title>The FRIGIDA complex activates transcription of FLC, a strong flowering repressor in Arabidopsis, by recruiting chromatin modification factors.</title>
        <authorList>
            <person name="Choi K."/>
            <person name="Kim J."/>
            <person name="Hwang H.J."/>
            <person name="Kim S."/>
            <person name="Park C."/>
            <person name="Kim S.Y."/>
            <person name="Lee I."/>
        </authorList>
    </citation>
    <scope>IDENTIFICATION BY MASS SPECTROMETRY</scope>
    <scope>INTERACTION WITH THE FRI-C COMPLEX AND SWC6</scope>
</reference>
<reference key="14">
    <citation type="journal article" date="2014" name="Mol. Plant">
        <title>Histone lysine methyltransferase SDG8 is involved in brassinosteroid-regulated gene expression in Arabidopsis thaliana.</title>
        <authorList>
            <person name="Wang X."/>
            <person name="Chen J."/>
            <person name="Xie Z."/>
            <person name="Liu S."/>
            <person name="Nolan T."/>
            <person name="Ye H."/>
            <person name="Zhang M."/>
            <person name="Guo H."/>
            <person name="Schnable P.S."/>
            <person name="Li Z."/>
            <person name="Yin Y."/>
        </authorList>
    </citation>
    <scope>FUNCTION</scope>
    <scope>INTERACTION WITH BZR2/BES1 AND IWS1</scope>
    <scope>SUBCELLULAR LOCATION</scope>
    <scope>DISRUPTION PHENOTYPE</scope>
</reference>
<reference key="15">
    <citation type="journal article" date="2011" name="EMBO J.">
        <title>The CW domain, a new histone recognition module in chromatin proteins.</title>
        <authorList>
            <person name="Hoppmann V."/>
            <person name="Thorstensen T."/>
            <person name="Kristiansen P.E."/>
            <person name="Veiseth S.V."/>
            <person name="Rahman M.A."/>
            <person name="Finne K."/>
            <person name="Aalen R.B."/>
            <person name="Aasland R."/>
        </authorList>
    </citation>
    <scope>STRUCTURE BY NMR OF 849-937 IN COMPLEX WITH ZINC AND METHYLATED H3K4 PEPTIDE</scope>
    <scope>MUTAGENESIS OF TRP-865; TRP-874; TRP-891; GLN-908 AND GLU-909</scope>
</reference>
<proteinExistence type="evidence at protein level"/>
<comment type="function">
    <text evidence="6 7 8 9 11 12 13 16">Histone methyltransferase involved in di and tri-methylation of 'Lys-36' of histone H3 (H3K36me2 and H3K36me3). Binds to H3 already mono- or di-methylated on 'Lys-4'(H3K4me1 or H3K4me2), but not to H3K4me3. H3K4me and H3K36me represent specific tags for epigenetic transcriptional activation. Positively regulates FLC transcription to prevent early flowering transition. Required for flowering transition in response to vernalization and for the maintenance of FLC expression in late embryos, but dispensable for the initial reactivation in early embryos during reprogramming. Also seems to modulate several traits including floral organ size, root size and dormancy. Promotes apical dominance (PubMed:10518493, PubMed:16258034, PubMed:16299497, PubMed:18070919, PubMed:19915673, PubMed:20711170). Directly involved in the tri-methylation of 'Lys-36' of histone H3 (H3K36me3) at LAZ5 chromatin to maintain a transcriptionally active state of LAZ5, a TIR-NB-LRR protein involved in innate immunity (PubMed:20949080). Required for brassinosteroid (BR)-induced gene expression and histone H3 trimethylation on 'Lys-36' (H3K36me3) in BR-regulated genes (PubMed:24838002).</text>
</comment>
<comment type="catalytic activity">
    <reaction>
        <text>N(6)-methyl-L-lysyl(36)-[histone H3] + S-adenosyl-L-methionine = N(6),N(6)-dimethyl-L-lysyl(36)-[histone H3] + S-adenosyl-L-homocysteine + H(+)</text>
        <dbReference type="Rhea" id="RHEA:60316"/>
        <dbReference type="Rhea" id="RHEA-COMP:9786"/>
        <dbReference type="Rhea" id="RHEA-COMP:9787"/>
        <dbReference type="ChEBI" id="CHEBI:15378"/>
        <dbReference type="ChEBI" id="CHEBI:57856"/>
        <dbReference type="ChEBI" id="CHEBI:59789"/>
        <dbReference type="ChEBI" id="CHEBI:61929"/>
        <dbReference type="ChEBI" id="CHEBI:61976"/>
    </reaction>
</comment>
<comment type="catalytic activity">
    <reaction>
        <text>N(6),N(6)-dimethyl-L-lysyl(36)-[histone H3] + S-adenosyl-L-methionine = N(6),N(6),N(6)-trimethyl-L-lysyl(36)-[histone H3] + S-adenosyl-L-homocysteine + H(+)</text>
        <dbReference type="Rhea" id="RHEA:60320"/>
        <dbReference type="Rhea" id="RHEA-COMP:9787"/>
        <dbReference type="Rhea" id="RHEA-COMP:15536"/>
        <dbReference type="ChEBI" id="CHEBI:15378"/>
        <dbReference type="ChEBI" id="CHEBI:57856"/>
        <dbReference type="ChEBI" id="CHEBI:59789"/>
        <dbReference type="ChEBI" id="CHEBI:61961"/>
        <dbReference type="ChEBI" id="CHEBI:61976"/>
    </reaction>
</comment>
<comment type="subunit">
    <text evidence="12 14 15 16">Interacts with FRI and SUF4, two components of the transcription activator complex FRI-C, and with SWC6, a component of the SWR1 chromatin-remodeling complex (PubMed:20711170, PubMed:21282526, PubMed:21522130). Interacts with BZR2/BES1 and IWS1 (PubMed:24838002).</text>
</comment>
<comment type="subcellular location">
    <subcellularLocation>
        <location evidence="9 16">Nucleus</location>
    </subcellularLocation>
    <subcellularLocation>
        <location evidence="21">Chromosome</location>
        <location evidence="21">Centromere</location>
    </subcellularLocation>
    <text evidence="20">Associates with centromeric constitutive heterochromatin.</text>
</comment>
<comment type="alternative products">
    <event type="alternative splicing"/>
    <isoform>
        <id>Q2LAE1-1</id>
        <name>1</name>
        <sequence type="displayed"/>
    </isoform>
    <isoform>
        <id>Q2LAE1-2</id>
        <name>2</name>
        <sequence type="described" ref="VSP_018133"/>
    </isoform>
</comment>
<comment type="tissue specificity">
    <text evidence="7 8 10 11">Ubiquitous, with higher levels in young tissues, including shoot and root apex. Expressed in ovules, tapetum layer and microspores.</text>
</comment>
<comment type="induction">
    <text evidence="10">Not regulated by vernalization.</text>
</comment>
<comment type="disruption phenotype">
    <text evidence="9 11 16">Early flowering. Pleiotropic developmental effects including dwarf and bushy phenotype, reduced seed setting and defects in ovule and embryo sac development (PubMed:18070919, PubMed:19915673, PubMed:24838002). Altered responses to brassinosteroid (BR) (PubMed:24838002).</text>
</comment>
<comment type="similarity">
    <text evidence="2">Belongs to the class V-like SAM-binding methyltransferase superfamily. Histone-lysine methyltransferase family. SET2 subfamily.</text>
</comment>
<comment type="sequence caution" evidence="20">
    <conflict type="erroneous gene model prediction">
        <sequence resource="EMBL-CDS" id="AAC34358"/>
    </conflict>
</comment>
<comment type="sequence caution" evidence="20">
    <conflict type="erroneous initiation">
        <sequence resource="EMBL-CDS" id="BAD94318"/>
    </conflict>
    <text>Truncated N-terminus.</text>
</comment>
<keyword id="KW-0002">3D-structure</keyword>
<keyword id="KW-0025">Alternative splicing</keyword>
<keyword id="KW-0137">Centromere</keyword>
<keyword id="KW-0156">Chromatin regulator</keyword>
<keyword id="KW-0158">Chromosome</keyword>
<keyword id="KW-0479">Metal-binding</keyword>
<keyword id="KW-0489">Methyltransferase</keyword>
<keyword id="KW-0539">Nucleus</keyword>
<keyword id="KW-1185">Reference proteome</keyword>
<keyword id="KW-0949">S-adenosyl-L-methionine</keyword>
<keyword id="KW-0808">Transferase</keyword>
<keyword id="KW-0862">Zinc</keyword>
<keyword id="KW-0863">Zinc-finger</keyword>